<protein>
    <recommendedName>
        <fullName evidence="1">Dihydroorotase</fullName>
        <shortName evidence="1">DHOase</shortName>
        <ecNumber evidence="1">3.5.2.3</ecNumber>
    </recommendedName>
</protein>
<comment type="function">
    <text evidence="1">Catalyzes the reversible cyclization of carbamoyl aspartate to dihydroorotate.</text>
</comment>
<comment type="catalytic activity">
    <reaction evidence="1">
        <text>(S)-dihydroorotate + H2O = N-carbamoyl-L-aspartate + H(+)</text>
        <dbReference type="Rhea" id="RHEA:24296"/>
        <dbReference type="ChEBI" id="CHEBI:15377"/>
        <dbReference type="ChEBI" id="CHEBI:15378"/>
        <dbReference type="ChEBI" id="CHEBI:30864"/>
        <dbReference type="ChEBI" id="CHEBI:32814"/>
        <dbReference type="EC" id="3.5.2.3"/>
    </reaction>
</comment>
<comment type="cofactor">
    <cofactor evidence="1">
        <name>Zn(2+)</name>
        <dbReference type="ChEBI" id="CHEBI:29105"/>
    </cofactor>
    <text evidence="1">Binds 2 Zn(2+) ions per subunit.</text>
</comment>
<comment type="pathway">
    <text evidence="1">Pyrimidine metabolism; UMP biosynthesis via de novo pathway; (S)-dihydroorotate from bicarbonate: step 3/3.</text>
</comment>
<comment type="subunit">
    <text evidence="1">Homodimer.</text>
</comment>
<comment type="similarity">
    <text evidence="1">Belongs to the metallo-dependent hydrolases superfamily. DHOase family. Class II DHOase subfamily.</text>
</comment>
<accession>B8E4P5</accession>
<organism>
    <name type="scientific">Shewanella baltica (strain OS223)</name>
    <dbReference type="NCBI Taxonomy" id="407976"/>
    <lineage>
        <taxon>Bacteria</taxon>
        <taxon>Pseudomonadati</taxon>
        <taxon>Pseudomonadota</taxon>
        <taxon>Gammaproteobacteria</taxon>
        <taxon>Alteromonadales</taxon>
        <taxon>Shewanellaceae</taxon>
        <taxon>Shewanella</taxon>
    </lineage>
</organism>
<dbReference type="EC" id="3.5.2.3" evidence="1"/>
<dbReference type="EMBL" id="CP001252">
    <property type="protein sequence ID" value="ACK45531.1"/>
    <property type="molecule type" value="Genomic_DNA"/>
</dbReference>
<dbReference type="RefSeq" id="WP_012586965.1">
    <property type="nucleotide sequence ID" value="NC_011663.1"/>
</dbReference>
<dbReference type="SMR" id="B8E4P5"/>
<dbReference type="MEROPS" id="M38.A02"/>
<dbReference type="KEGG" id="sbp:Sbal223_1016"/>
<dbReference type="HOGENOM" id="CLU_041558_1_0_6"/>
<dbReference type="UniPathway" id="UPA00070">
    <property type="reaction ID" value="UER00117"/>
</dbReference>
<dbReference type="Proteomes" id="UP000002507">
    <property type="component" value="Chromosome"/>
</dbReference>
<dbReference type="GO" id="GO:0005829">
    <property type="term" value="C:cytosol"/>
    <property type="evidence" value="ECO:0007669"/>
    <property type="project" value="TreeGrafter"/>
</dbReference>
<dbReference type="GO" id="GO:0004151">
    <property type="term" value="F:dihydroorotase activity"/>
    <property type="evidence" value="ECO:0007669"/>
    <property type="project" value="UniProtKB-UniRule"/>
</dbReference>
<dbReference type="GO" id="GO:0008270">
    <property type="term" value="F:zinc ion binding"/>
    <property type="evidence" value="ECO:0007669"/>
    <property type="project" value="UniProtKB-UniRule"/>
</dbReference>
<dbReference type="GO" id="GO:0006207">
    <property type="term" value="P:'de novo' pyrimidine nucleobase biosynthetic process"/>
    <property type="evidence" value="ECO:0007669"/>
    <property type="project" value="TreeGrafter"/>
</dbReference>
<dbReference type="GO" id="GO:0044205">
    <property type="term" value="P:'de novo' UMP biosynthetic process"/>
    <property type="evidence" value="ECO:0007669"/>
    <property type="project" value="UniProtKB-UniRule"/>
</dbReference>
<dbReference type="CDD" id="cd01294">
    <property type="entry name" value="DHOase"/>
    <property type="match status" value="1"/>
</dbReference>
<dbReference type="FunFam" id="3.20.20.140:FF:000006">
    <property type="entry name" value="Dihydroorotase"/>
    <property type="match status" value="1"/>
</dbReference>
<dbReference type="Gene3D" id="3.20.20.140">
    <property type="entry name" value="Metal-dependent hydrolases"/>
    <property type="match status" value="1"/>
</dbReference>
<dbReference type="HAMAP" id="MF_00219">
    <property type="entry name" value="PyrC_classII"/>
    <property type="match status" value="1"/>
</dbReference>
<dbReference type="InterPro" id="IPR006680">
    <property type="entry name" value="Amidohydro-rel"/>
</dbReference>
<dbReference type="InterPro" id="IPR004721">
    <property type="entry name" value="DHOdimr"/>
</dbReference>
<dbReference type="InterPro" id="IPR002195">
    <property type="entry name" value="Dihydroorotase_CS"/>
</dbReference>
<dbReference type="InterPro" id="IPR032466">
    <property type="entry name" value="Metal_Hydrolase"/>
</dbReference>
<dbReference type="NCBIfam" id="TIGR00856">
    <property type="entry name" value="pyrC_dimer"/>
    <property type="match status" value="1"/>
</dbReference>
<dbReference type="PANTHER" id="PTHR43137">
    <property type="entry name" value="DIHYDROOROTASE"/>
    <property type="match status" value="1"/>
</dbReference>
<dbReference type="PANTHER" id="PTHR43137:SF1">
    <property type="entry name" value="DIHYDROOROTASE"/>
    <property type="match status" value="1"/>
</dbReference>
<dbReference type="Pfam" id="PF01979">
    <property type="entry name" value="Amidohydro_1"/>
    <property type="match status" value="1"/>
</dbReference>
<dbReference type="PIRSF" id="PIRSF001237">
    <property type="entry name" value="DHOdimr"/>
    <property type="match status" value="1"/>
</dbReference>
<dbReference type="SUPFAM" id="SSF51556">
    <property type="entry name" value="Metallo-dependent hydrolases"/>
    <property type="match status" value="1"/>
</dbReference>
<dbReference type="PROSITE" id="PS00482">
    <property type="entry name" value="DIHYDROOROTASE_1"/>
    <property type="match status" value="1"/>
</dbReference>
<dbReference type="PROSITE" id="PS00483">
    <property type="entry name" value="DIHYDROOROTASE_2"/>
    <property type="match status" value="1"/>
</dbReference>
<feature type="chain" id="PRO_1000193082" description="Dihydroorotase">
    <location>
        <begin position="1"/>
        <end position="343"/>
    </location>
</feature>
<feature type="active site" evidence="1">
    <location>
        <position position="247"/>
    </location>
</feature>
<feature type="binding site" evidence="1">
    <location>
        <position position="13"/>
    </location>
    <ligand>
        <name>Zn(2+)</name>
        <dbReference type="ChEBI" id="CHEBI:29105"/>
        <label>1</label>
    </ligand>
</feature>
<feature type="binding site" evidence="1">
    <location>
        <begin position="15"/>
        <end position="17"/>
    </location>
    <ligand>
        <name>substrate</name>
    </ligand>
</feature>
<feature type="binding site" evidence="1">
    <location>
        <position position="15"/>
    </location>
    <ligand>
        <name>Zn(2+)</name>
        <dbReference type="ChEBI" id="CHEBI:29105"/>
        <label>1</label>
    </ligand>
</feature>
<feature type="binding site" evidence="1">
    <location>
        <position position="41"/>
    </location>
    <ligand>
        <name>substrate</name>
    </ligand>
</feature>
<feature type="binding site" description="via carbamate group" evidence="1">
    <location>
        <position position="99"/>
    </location>
    <ligand>
        <name>Zn(2+)</name>
        <dbReference type="ChEBI" id="CHEBI:29105"/>
        <label>1</label>
    </ligand>
</feature>
<feature type="binding site" description="via carbamate group" evidence="1">
    <location>
        <position position="99"/>
    </location>
    <ligand>
        <name>Zn(2+)</name>
        <dbReference type="ChEBI" id="CHEBI:29105"/>
        <label>2</label>
    </ligand>
</feature>
<feature type="binding site" evidence="1">
    <location>
        <position position="136"/>
    </location>
    <ligand>
        <name>substrate</name>
    </ligand>
</feature>
<feature type="binding site" evidence="1">
    <location>
        <position position="136"/>
    </location>
    <ligand>
        <name>Zn(2+)</name>
        <dbReference type="ChEBI" id="CHEBI:29105"/>
        <label>2</label>
    </ligand>
</feature>
<feature type="binding site" evidence="1">
    <location>
        <position position="174"/>
    </location>
    <ligand>
        <name>Zn(2+)</name>
        <dbReference type="ChEBI" id="CHEBI:29105"/>
        <label>2</label>
    </ligand>
</feature>
<feature type="binding site" evidence="1">
    <location>
        <position position="219"/>
    </location>
    <ligand>
        <name>substrate</name>
    </ligand>
</feature>
<feature type="binding site" evidence="1">
    <location>
        <position position="247"/>
    </location>
    <ligand>
        <name>Zn(2+)</name>
        <dbReference type="ChEBI" id="CHEBI:29105"/>
        <label>1</label>
    </ligand>
</feature>
<feature type="binding site" evidence="1">
    <location>
        <position position="251"/>
    </location>
    <ligand>
        <name>substrate</name>
    </ligand>
</feature>
<feature type="binding site" evidence="1">
    <location>
        <position position="263"/>
    </location>
    <ligand>
        <name>substrate</name>
    </ligand>
</feature>
<feature type="modified residue" description="N6-carboxylysine" evidence="1">
    <location>
        <position position="99"/>
    </location>
</feature>
<gene>
    <name evidence="1" type="primary">pyrC</name>
    <name type="ordered locus">Sbal223_1016</name>
</gene>
<sequence>MTTITITRPDDWHIHLRDGAQLKDTVRDISRYMGRAIVMPNLVPPAIDTETALTYYDRIKAQVPAGSQFEPLMVLYLTDKTSPDEIRKAKASGKIVAAKLYPAGATTNSDSGVTDLKNIYPALEAMQEVGMLFLVHGEVTDSSIDIFDRERVFIENILSKIVADFPELKIVLEHITTKDAVDFVTQASDNVAATITAHHLLYNRNHMLAGGIRPHFYCLPILKRNTHQQALLAAAASGSKKFFLGTDSAPHAKDKKEAACGCAGSYTAHAAIELYAEAFESVNALDKLEAFASFNGPDFYNLPRNADTITLVKKSWDVPATYPLGDTNVVPIRAGEAIDWQVE</sequence>
<name>PYRC_SHEB2</name>
<proteinExistence type="inferred from homology"/>
<reference key="1">
    <citation type="submission" date="2008-12" db="EMBL/GenBank/DDBJ databases">
        <title>Complete sequence of chromosome of Shewanella baltica OS223.</title>
        <authorList>
            <consortium name="US DOE Joint Genome Institute"/>
            <person name="Lucas S."/>
            <person name="Copeland A."/>
            <person name="Lapidus A."/>
            <person name="Glavina del Rio T."/>
            <person name="Dalin E."/>
            <person name="Tice H."/>
            <person name="Bruce D."/>
            <person name="Goodwin L."/>
            <person name="Pitluck S."/>
            <person name="Chertkov O."/>
            <person name="Meincke L."/>
            <person name="Brettin T."/>
            <person name="Detter J.C."/>
            <person name="Han C."/>
            <person name="Kuske C.R."/>
            <person name="Larimer F."/>
            <person name="Land M."/>
            <person name="Hauser L."/>
            <person name="Kyrpides N."/>
            <person name="Ovchinnikova G."/>
            <person name="Brettar I."/>
            <person name="Rodrigues J."/>
            <person name="Konstantinidis K."/>
            <person name="Tiedje J."/>
        </authorList>
    </citation>
    <scope>NUCLEOTIDE SEQUENCE [LARGE SCALE GENOMIC DNA]</scope>
    <source>
        <strain>OS223</strain>
    </source>
</reference>
<evidence type="ECO:0000255" key="1">
    <source>
        <dbReference type="HAMAP-Rule" id="MF_00219"/>
    </source>
</evidence>
<keyword id="KW-0378">Hydrolase</keyword>
<keyword id="KW-0479">Metal-binding</keyword>
<keyword id="KW-0665">Pyrimidine biosynthesis</keyword>
<keyword id="KW-0862">Zinc</keyword>